<organism>
    <name type="scientific">Mus musculus</name>
    <name type="common">Mouse</name>
    <dbReference type="NCBI Taxonomy" id="10090"/>
    <lineage>
        <taxon>Eukaryota</taxon>
        <taxon>Metazoa</taxon>
        <taxon>Chordata</taxon>
        <taxon>Craniata</taxon>
        <taxon>Vertebrata</taxon>
        <taxon>Euteleostomi</taxon>
        <taxon>Mammalia</taxon>
        <taxon>Eutheria</taxon>
        <taxon>Euarchontoglires</taxon>
        <taxon>Glires</taxon>
        <taxon>Rodentia</taxon>
        <taxon>Myomorpha</taxon>
        <taxon>Muroidea</taxon>
        <taxon>Muridae</taxon>
        <taxon>Murinae</taxon>
        <taxon>Mus</taxon>
        <taxon>Mus</taxon>
    </lineage>
</organism>
<protein>
    <recommendedName>
        <fullName>RING finger protein 223</fullName>
    </recommendedName>
</protein>
<accession>Q3UV31</accession>
<comment type="subcellular location">
    <subcellularLocation>
        <location evidence="3">Membrane</location>
        <topology evidence="3">Single-pass membrane protein</topology>
    </subcellularLocation>
</comment>
<feature type="chain" id="PRO_0000410920" description="RING finger protein 223">
    <location>
        <begin position="1"/>
        <end position="285"/>
    </location>
</feature>
<feature type="transmembrane region" description="Helical" evidence="1">
    <location>
        <begin position="230"/>
        <end position="250"/>
    </location>
</feature>
<feature type="zinc finger region" description="RING-type" evidence="2">
    <location>
        <begin position="81"/>
        <end position="132"/>
    </location>
</feature>
<feature type="sequence conflict" description="In Ref. 1; BAE23442." evidence="3" ref="1">
    <original>A</original>
    <variation>T</variation>
    <location>
        <position position="270"/>
    </location>
</feature>
<keyword id="KW-0472">Membrane</keyword>
<keyword id="KW-0479">Metal-binding</keyword>
<keyword id="KW-1185">Reference proteome</keyword>
<keyword id="KW-0812">Transmembrane</keyword>
<keyword id="KW-1133">Transmembrane helix</keyword>
<keyword id="KW-0862">Zinc</keyword>
<keyword id="KW-0863">Zinc-finger</keyword>
<evidence type="ECO:0000255" key="1"/>
<evidence type="ECO:0000255" key="2">
    <source>
        <dbReference type="PROSITE-ProRule" id="PRU00175"/>
    </source>
</evidence>
<evidence type="ECO:0000305" key="3"/>
<gene>
    <name type="primary">Rnf223</name>
</gene>
<proteinExistence type="evidence at transcript level"/>
<reference key="1">
    <citation type="journal article" date="2005" name="Science">
        <title>The transcriptional landscape of the mammalian genome.</title>
        <authorList>
            <person name="Carninci P."/>
            <person name="Kasukawa T."/>
            <person name="Katayama S."/>
            <person name="Gough J."/>
            <person name="Frith M.C."/>
            <person name="Maeda N."/>
            <person name="Oyama R."/>
            <person name="Ravasi T."/>
            <person name="Lenhard B."/>
            <person name="Wells C."/>
            <person name="Kodzius R."/>
            <person name="Shimokawa K."/>
            <person name="Bajic V.B."/>
            <person name="Brenner S.E."/>
            <person name="Batalov S."/>
            <person name="Forrest A.R."/>
            <person name="Zavolan M."/>
            <person name="Davis M.J."/>
            <person name="Wilming L.G."/>
            <person name="Aidinis V."/>
            <person name="Allen J.E."/>
            <person name="Ambesi-Impiombato A."/>
            <person name="Apweiler R."/>
            <person name="Aturaliya R.N."/>
            <person name="Bailey T.L."/>
            <person name="Bansal M."/>
            <person name="Baxter L."/>
            <person name="Beisel K.W."/>
            <person name="Bersano T."/>
            <person name="Bono H."/>
            <person name="Chalk A.M."/>
            <person name="Chiu K.P."/>
            <person name="Choudhary V."/>
            <person name="Christoffels A."/>
            <person name="Clutterbuck D.R."/>
            <person name="Crowe M.L."/>
            <person name="Dalla E."/>
            <person name="Dalrymple B.P."/>
            <person name="de Bono B."/>
            <person name="Della Gatta G."/>
            <person name="di Bernardo D."/>
            <person name="Down T."/>
            <person name="Engstrom P."/>
            <person name="Fagiolini M."/>
            <person name="Faulkner G."/>
            <person name="Fletcher C.F."/>
            <person name="Fukushima T."/>
            <person name="Furuno M."/>
            <person name="Futaki S."/>
            <person name="Gariboldi M."/>
            <person name="Georgii-Hemming P."/>
            <person name="Gingeras T.R."/>
            <person name="Gojobori T."/>
            <person name="Green R.E."/>
            <person name="Gustincich S."/>
            <person name="Harbers M."/>
            <person name="Hayashi Y."/>
            <person name="Hensch T.K."/>
            <person name="Hirokawa N."/>
            <person name="Hill D."/>
            <person name="Huminiecki L."/>
            <person name="Iacono M."/>
            <person name="Ikeo K."/>
            <person name="Iwama A."/>
            <person name="Ishikawa T."/>
            <person name="Jakt M."/>
            <person name="Kanapin A."/>
            <person name="Katoh M."/>
            <person name="Kawasawa Y."/>
            <person name="Kelso J."/>
            <person name="Kitamura H."/>
            <person name="Kitano H."/>
            <person name="Kollias G."/>
            <person name="Krishnan S.P."/>
            <person name="Kruger A."/>
            <person name="Kummerfeld S.K."/>
            <person name="Kurochkin I.V."/>
            <person name="Lareau L.F."/>
            <person name="Lazarevic D."/>
            <person name="Lipovich L."/>
            <person name="Liu J."/>
            <person name="Liuni S."/>
            <person name="McWilliam S."/>
            <person name="Madan Babu M."/>
            <person name="Madera M."/>
            <person name="Marchionni L."/>
            <person name="Matsuda H."/>
            <person name="Matsuzawa S."/>
            <person name="Miki H."/>
            <person name="Mignone F."/>
            <person name="Miyake S."/>
            <person name="Morris K."/>
            <person name="Mottagui-Tabar S."/>
            <person name="Mulder N."/>
            <person name="Nakano N."/>
            <person name="Nakauchi H."/>
            <person name="Ng P."/>
            <person name="Nilsson R."/>
            <person name="Nishiguchi S."/>
            <person name="Nishikawa S."/>
            <person name="Nori F."/>
            <person name="Ohara O."/>
            <person name="Okazaki Y."/>
            <person name="Orlando V."/>
            <person name="Pang K.C."/>
            <person name="Pavan W.J."/>
            <person name="Pavesi G."/>
            <person name="Pesole G."/>
            <person name="Petrovsky N."/>
            <person name="Piazza S."/>
            <person name="Reed J."/>
            <person name="Reid J.F."/>
            <person name="Ring B.Z."/>
            <person name="Ringwald M."/>
            <person name="Rost B."/>
            <person name="Ruan Y."/>
            <person name="Salzberg S.L."/>
            <person name="Sandelin A."/>
            <person name="Schneider C."/>
            <person name="Schoenbach C."/>
            <person name="Sekiguchi K."/>
            <person name="Semple C.A."/>
            <person name="Seno S."/>
            <person name="Sessa L."/>
            <person name="Sheng Y."/>
            <person name="Shibata Y."/>
            <person name="Shimada H."/>
            <person name="Shimada K."/>
            <person name="Silva D."/>
            <person name="Sinclair B."/>
            <person name="Sperling S."/>
            <person name="Stupka E."/>
            <person name="Sugiura K."/>
            <person name="Sultana R."/>
            <person name="Takenaka Y."/>
            <person name="Taki K."/>
            <person name="Tammoja K."/>
            <person name="Tan S.L."/>
            <person name="Tang S."/>
            <person name="Taylor M.S."/>
            <person name="Tegner J."/>
            <person name="Teichmann S.A."/>
            <person name="Ueda H.R."/>
            <person name="van Nimwegen E."/>
            <person name="Verardo R."/>
            <person name="Wei C.L."/>
            <person name="Yagi K."/>
            <person name="Yamanishi H."/>
            <person name="Zabarovsky E."/>
            <person name="Zhu S."/>
            <person name="Zimmer A."/>
            <person name="Hide W."/>
            <person name="Bult C."/>
            <person name="Grimmond S.M."/>
            <person name="Teasdale R.D."/>
            <person name="Liu E.T."/>
            <person name="Brusic V."/>
            <person name="Quackenbush J."/>
            <person name="Wahlestedt C."/>
            <person name="Mattick J.S."/>
            <person name="Hume D.A."/>
            <person name="Kai C."/>
            <person name="Sasaki D."/>
            <person name="Tomaru Y."/>
            <person name="Fukuda S."/>
            <person name="Kanamori-Katayama M."/>
            <person name="Suzuki M."/>
            <person name="Aoki J."/>
            <person name="Arakawa T."/>
            <person name="Iida J."/>
            <person name="Imamura K."/>
            <person name="Itoh M."/>
            <person name="Kato T."/>
            <person name="Kawaji H."/>
            <person name="Kawagashira N."/>
            <person name="Kawashima T."/>
            <person name="Kojima M."/>
            <person name="Kondo S."/>
            <person name="Konno H."/>
            <person name="Nakano K."/>
            <person name="Ninomiya N."/>
            <person name="Nishio T."/>
            <person name="Okada M."/>
            <person name="Plessy C."/>
            <person name="Shibata K."/>
            <person name="Shiraki T."/>
            <person name="Suzuki S."/>
            <person name="Tagami M."/>
            <person name="Waki K."/>
            <person name="Watahiki A."/>
            <person name="Okamura-Oho Y."/>
            <person name="Suzuki H."/>
            <person name="Kawai J."/>
            <person name="Hayashizaki Y."/>
        </authorList>
    </citation>
    <scope>NUCLEOTIDE SEQUENCE [LARGE SCALE MRNA]</scope>
    <source>
        <strain>C57BL/6J</strain>
        <tissue>Vagina</tissue>
    </source>
</reference>
<reference key="2">
    <citation type="journal article" date="2009" name="PLoS Biol.">
        <title>Lineage-specific biology revealed by a finished genome assembly of the mouse.</title>
        <authorList>
            <person name="Church D.M."/>
            <person name="Goodstadt L."/>
            <person name="Hillier L.W."/>
            <person name="Zody M.C."/>
            <person name="Goldstein S."/>
            <person name="She X."/>
            <person name="Bult C.J."/>
            <person name="Agarwala R."/>
            <person name="Cherry J.L."/>
            <person name="DiCuccio M."/>
            <person name="Hlavina W."/>
            <person name="Kapustin Y."/>
            <person name="Meric P."/>
            <person name="Maglott D."/>
            <person name="Birtle Z."/>
            <person name="Marques A.C."/>
            <person name="Graves T."/>
            <person name="Zhou S."/>
            <person name="Teague B."/>
            <person name="Potamousis K."/>
            <person name="Churas C."/>
            <person name="Place M."/>
            <person name="Herschleb J."/>
            <person name="Runnheim R."/>
            <person name="Forrest D."/>
            <person name="Amos-Landgraf J."/>
            <person name="Schwartz D.C."/>
            <person name="Cheng Z."/>
            <person name="Lindblad-Toh K."/>
            <person name="Eichler E.E."/>
            <person name="Ponting C.P."/>
        </authorList>
    </citation>
    <scope>NUCLEOTIDE SEQUENCE [LARGE SCALE GENOMIC DNA]</scope>
    <source>
        <strain>C57BL/6J</strain>
    </source>
</reference>
<name>RN223_MOUSE</name>
<dbReference type="EMBL" id="AK137636">
    <property type="protein sequence ID" value="BAE23442.1"/>
    <property type="molecule type" value="mRNA"/>
</dbReference>
<dbReference type="EMBL" id="AL928667">
    <property type="status" value="NOT_ANNOTATED_CDS"/>
    <property type="molecule type" value="Genomic_DNA"/>
</dbReference>
<dbReference type="STRING" id="10090.ENSMUSP00000147415"/>
<dbReference type="GlyGen" id="Q3UV31">
    <property type="glycosylation" value="1 site"/>
</dbReference>
<dbReference type="ProteomicsDB" id="299850"/>
<dbReference type="UCSC" id="uc029vbg.1">
    <property type="organism name" value="mouse"/>
</dbReference>
<dbReference type="AGR" id="MGI:3588193"/>
<dbReference type="MGI" id="MGI:3588193">
    <property type="gene designation" value="Rnf223"/>
</dbReference>
<dbReference type="InParanoid" id="Q3UV31"/>
<dbReference type="PRO" id="PR:Q3UV31"/>
<dbReference type="Proteomes" id="UP000000589">
    <property type="component" value="Unplaced"/>
</dbReference>
<dbReference type="RNAct" id="Q3UV31">
    <property type="molecule type" value="protein"/>
</dbReference>
<dbReference type="GO" id="GO:0016020">
    <property type="term" value="C:membrane"/>
    <property type="evidence" value="ECO:0007669"/>
    <property type="project" value="UniProtKB-SubCell"/>
</dbReference>
<dbReference type="GO" id="GO:0008270">
    <property type="term" value="F:zinc ion binding"/>
    <property type="evidence" value="ECO:0007669"/>
    <property type="project" value="UniProtKB-KW"/>
</dbReference>
<dbReference type="CDD" id="cd16556">
    <property type="entry name" value="RING-HC_RNF183-like"/>
    <property type="match status" value="1"/>
</dbReference>
<dbReference type="Gene3D" id="3.30.40.10">
    <property type="entry name" value="Zinc/RING finger domain, C3HC4 (zinc finger)"/>
    <property type="match status" value="1"/>
</dbReference>
<dbReference type="InterPro" id="IPR051435">
    <property type="entry name" value="RING_finger_E3_ubiq-ligases"/>
</dbReference>
<dbReference type="InterPro" id="IPR027370">
    <property type="entry name" value="Znf-RING_euk"/>
</dbReference>
<dbReference type="InterPro" id="IPR001841">
    <property type="entry name" value="Znf_RING"/>
</dbReference>
<dbReference type="InterPro" id="IPR013083">
    <property type="entry name" value="Znf_RING/FYVE/PHD"/>
</dbReference>
<dbReference type="InterPro" id="IPR017907">
    <property type="entry name" value="Znf_RING_CS"/>
</dbReference>
<dbReference type="PANTHER" id="PTHR22791:SF4">
    <property type="entry name" value="RING FINGER PROTEIN 223"/>
    <property type="match status" value="1"/>
</dbReference>
<dbReference type="PANTHER" id="PTHR22791">
    <property type="entry name" value="RING-TYPE DOMAIN-CONTAINING PROTEIN"/>
    <property type="match status" value="1"/>
</dbReference>
<dbReference type="Pfam" id="PF13445">
    <property type="entry name" value="zf-RING_UBOX"/>
    <property type="match status" value="1"/>
</dbReference>
<dbReference type="SMART" id="SM00184">
    <property type="entry name" value="RING"/>
    <property type="match status" value="1"/>
</dbReference>
<dbReference type="SUPFAM" id="SSF57850">
    <property type="entry name" value="RING/U-box"/>
    <property type="match status" value="1"/>
</dbReference>
<dbReference type="PROSITE" id="PS00518">
    <property type="entry name" value="ZF_RING_1"/>
    <property type="match status" value="1"/>
</dbReference>
<dbReference type="PROSITE" id="PS50089">
    <property type="entry name" value="ZF_RING_2"/>
    <property type="match status" value="1"/>
</dbReference>
<sequence>MVHKKRGGVTSWLFRKSPVHNVLPLLHSWESCHQATGCGVQLCHPTARTAPQPQCPGPLAQGAAPSPSTPGSVKVASPLECSICFSGYDNIFKTPKELSCSHVFCLECLARLAAAQPAGRSGREAVPCPFCRQPTTVPVAGAPALRTSRQLQAKLPAHLQREEPVWLEGTKLCCRPLPTTSGQEDGGFVSVDVGLSKPAEPTLPVPVQDPAPNPGWLARCWARFRDWRRVALVSVLLLVLFCVILWPVQCALKTGNLRCINRPPAATATATVTTDALSFGVLANN</sequence>